<name>Y1289_PSEPK</name>
<gene>
    <name type="ordered locus">PP_1289</name>
</gene>
<evidence type="ECO:0000255" key="1">
    <source>
        <dbReference type="HAMAP-Rule" id="MF_00652"/>
    </source>
</evidence>
<protein>
    <recommendedName>
        <fullName evidence="1">UPF0246 protein PP_1289</fullName>
    </recommendedName>
</protein>
<feature type="chain" id="PRO_0000203996" description="UPF0246 protein PP_1289">
    <location>
        <begin position="1"/>
        <end position="259"/>
    </location>
</feature>
<dbReference type="EMBL" id="AE015451">
    <property type="protein sequence ID" value="AAN66913.1"/>
    <property type="molecule type" value="Genomic_DNA"/>
</dbReference>
<dbReference type="RefSeq" id="NP_743449.1">
    <property type="nucleotide sequence ID" value="NC_002947.4"/>
</dbReference>
<dbReference type="SMR" id="Q88NC3"/>
<dbReference type="STRING" id="160488.PP_1289"/>
<dbReference type="PaxDb" id="160488-PP_1289"/>
<dbReference type="KEGG" id="ppu:PP_1289"/>
<dbReference type="PATRIC" id="fig|160488.4.peg.1366"/>
<dbReference type="eggNOG" id="COG3022">
    <property type="taxonomic scope" value="Bacteria"/>
</dbReference>
<dbReference type="HOGENOM" id="CLU_061989_0_0_6"/>
<dbReference type="OrthoDB" id="9777133at2"/>
<dbReference type="PhylomeDB" id="Q88NC3"/>
<dbReference type="BioCyc" id="PPUT160488:G1G01-1376-MONOMER"/>
<dbReference type="Proteomes" id="UP000000556">
    <property type="component" value="Chromosome"/>
</dbReference>
<dbReference type="GO" id="GO:0005829">
    <property type="term" value="C:cytosol"/>
    <property type="evidence" value="ECO:0007669"/>
    <property type="project" value="TreeGrafter"/>
</dbReference>
<dbReference type="GO" id="GO:0033194">
    <property type="term" value="P:response to hydroperoxide"/>
    <property type="evidence" value="ECO:0007669"/>
    <property type="project" value="TreeGrafter"/>
</dbReference>
<dbReference type="HAMAP" id="MF_00652">
    <property type="entry name" value="UPF0246"/>
    <property type="match status" value="1"/>
</dbReference>
<dbReference type="InterPro" id="IPR005583">
    <property type="entry name" value="YaaA"/>
</dbReference>
<dbReference type="NCBIfam" id="NF002541">
    <property type="entry name" value="PRK02101.1-1"/>
    <property type="match status" value="1"/>
</dbReference>
<dbReference type="NCBIfam" id="NF002542">
    <property type="entry name" value="PRK02101.1-3"/>
    <property type="match status" value="1"/>
</dbReference>
<dbReference type="PANTHER" id="PTHR30283:SF4">
    <property type="entry name" value="PEROXIDE STRESS RESISTANCE PROTEIN YAAA"/>
    <property type="match status" value="1"/>
</dbReference>
<dbReference type="PANTHER" id="PTHR30283">
    <property type="entry name" value="PEROXIDE STRESS RESPONSE PROTEIN YAAA"/>
    <property type="match status" value="1"/>
</dbReference>
<dbReference type="Pfam" id="PF03883">
    <property type="entry name" value="H2O2_YaaD"/>
    <property type="match status" value="1"/>
</dbReference>
<accession>Q88NC3</accession>
<proteinExistence type="inferred from homology"/>
<reference key="1">
    <citation type="journal article" date="2002" name="Environ. Microbiol.">
        <title>Complete genome sequence and comparative analysis of the metabolically versatile Pseudomonas putida KT2440.</title>
        <authorList>
            <person name="Nelson K.E."/>
            <person name="Weinel C."/>
            <person name="Paulsen I.T."/>
            <person name="Dodson R.J."/>
            <person name="Hilbert H."/>
            <person name="Martins dos Santos V.A.P."/>
            <person name="Fouts D.E."/>
            <person name="Gill S.R."/>
            <person name="Pop M."/>
            <person name="Holmes M."/>
            <person name="Brinkac L.M."/>
            <person name="Beanan M.J."/>
            <person name="DeBoy R.T."/>
            <person name="Daugherty S.C."/>
            <person name="Kolonay J.F."/>
            <person name="Madupu R."/>
            <person name="Nelson W.C."/>
            <person name="White O."/>
            <person name="Peterson J.D."/>
            <person name="Khouri H.M."/>
            <person name="Hance I."/>
            <person name="Chris Lee P."/>
            <person name="Holtzapple E.K."/>
            <person name="Scanlan D."/>
            <person name="Tran K."/>
            <person name="Moazzez A."/>
            <person name="Utterback T.R."/>
            <person name="Rizzo M."/>
            <person name="Lee K."/>
            <person name="Kosack D."/>
            <person name="Moestl D."/>
            <person name="Wedler H."/>
            <person name="Lauber J."/>
            <person name="Stjepandic D."/>
            <person name="Hoheisel J."/>
            <person name="Straetz M."/>
            <person name="Heim S."/>
            <person name="Kiewitz C."/>
            <person name="Eisen J.A."/>
            <person name="Timmis K.N."/>
            <person name="Duesterhoeft A."/>
            <person name="Tuemmler B."/>
            <person name="Fraser C.M."/>
        </authorList>
    </citation>
    <scope>NUCLEOTIDE SEQUENCE [LARGE SCALE GENOMIC DNA]</scope>
    <source>
        <strain>ATCC 47054 / DSM 6125 / CFBP 8728 / NCIMB 11950 / KT2440</strain>
    </source>
</reference>
<comment type="similarity">
    <text evidence="1">Belongs to the UPF0246 family.</text>
</comment>
<organism>
    <name type="scientific">Pseudomonas putida (strain ATCC 47054 / DSM 6125 / CFBP 8728 / NCIMB 11950 / KT2440)</name>
    <dbReference type="NCBI Taxonomy" id="160488"/>
    <lineage>
        <taxon>Bacteria</taxon>
        <taxon>Pseudomonadati</taxon>
        <taxon>Pseudomonadota</taxon>
        <taxon>Gammaproteobacteria</taxon>
        <taxon>Pseudomonadales</taxon>
        <taxon>Pseudomonadaceae</taxon>
        <taxon>Pseudomonas</taxon>
    </lineage>
</organism>
<sequence length="259" mass="29332">MLTVISPAKTLDYDTPPVTERFTLPQYLDESQALIQQLRELSPAQISELMHLSDKLAGLNAARFGSWTPDFTPANAKQALLAFKGDVYTGLDAESLSEDDFSYAQGHLRMLSGLYGLLRPLDLMQPYRLEMGTKLANARGKDLYAFWGTRISEWLNQALADQGDDVLLNLASNEYFSAVKRSALKARVINVDFKDQKNGQYKIISFYAKKARGMMSRFVIQQRISTPEQLKQFDAQGYYYSAEQSKPDHLVFLRDHPAE</sequence>
<keyword id="KW-1185">Reference proteome</keyword>